<accession>B1ISK6</accession>
<evidence type="ECO:0000255" key="1">
    <source>
        <dbReference type="HAMAP-Rule" id="MF_01616"/>
    </source>
</evidence>
<evidence type="ECO:0000305" key="2"/>
<protein>
    <recommendedName>
        <fullName evidence="1">Membrane-bound lytic murein transglycosylase C</fullName>
        <ecNumber evidence="1">4.2.2.n1</ecNumber>
    </recommendedName>
    <alternativeName>
        <fullName evidence="1">Murein lyase C</fullName>
    </alternativeName>
</protein>
<keyword id="KW-0998">Cell outer membrane</keyword>
<keyword id="KW-0961">Cell wall biogenesis/degradation</keyword>
<keyword id="KW-0449">Lipoprotein</keyword>
<keyword id="KW-0456">Lyase</keyword>
<keyword id="KW-0472">Membrane</keyword>
<keyword id="KW-0564">Palmitate</keyword>
<keyword id="KW-0732">Signal</keyword>
<organism>
    <name type="scientific">Escherichia coli (strain ATCC 8739 / DSM 1576 / NBRC 3972 / NCIMB 8545 / WDCM 00012 / Crooks)</name>
    <dbReference type="NCBI Taxonomy" id="481805"/>
    <lineage>
        <taxon>Bacteria</taxon>
        <taxon>Pseudomonadati</taxon>
        <taxon>Pseudomonadota</taxon>
        <taxon>Gammaproteobacteria</taxon>
        <taxon>Enterobacterales</taxon>
        <taxon>Enterobacteriaceae</taxon>
        <taxon>Escherichia</taxon>
    </lineage>
</organism>
<dbReference type="EC" id="4.2.2.n1" evidence="1"/>
<dbReference type="EMBL" id="CP000946">
    <property type="protein sequence ID" value="ACA76423.1"/>
    <property type="status" value="ALT_INIT"/>
    <property type="molecule type" value="Genomic_DNA"/>
</dbReference>
<dbReference type="RefSeq" id="WP_001298916.1">
    <property type="nucleotide sequence ID" value="NZ_MTFT01000004.1"/>
</dbReference>
<dbReference type="SMR" id="B1ISK6"/>
<dbReference type="CAZy" id="GH23">
    <property type="family name" value="Glycoside Hydrolase Family 23"/>
</dbReference>
<dbReference type="GeneID" id="93779028"/>
<dbReference type="KEGG" id="ecl:EcolC_0751"/>
<dbReference type="HOGENOM" id="CLU_044583_0_0_6"/>
<dbReference type="GO" id="GO:0009279">
    <property type="term" value="C:cell outer membrane"/>
    <property type="evidence" value="ECO:0007669"/>
    <property type="project" value="UniProtKB-SubCell"/>
</dbReference>
<dbReference type="GO" id="GO:0016798">
    <property type="term" value="F:hydrolase activity, acting on glycosyl bonds"/>
    <property type="evidence" value="ECO:0007669"/>
    <property type="project" value="InterPro"/>
</dbReference>
<dbReference type="GO" id="GO:0008933">
    <property type="term" value="F:peptidoglycan lytic transglycosylase activity"/>
    <property type="evidence" value="ECO:0007669"/>
    <property type="project" value="UniProtKB-UniRule"/>
</dbReference>
<dbReference type="GO" id="GO:0016998">
    <property type="term" value="P:cell wall macromolecule catabolic process"/>
    <property type="evidence" value="ECO:0007669"/>
    <property type="project" value="UniProtKB-UniRule"/>
</dbReference>
<dbReference type="GO" id="GO:0071555">
    <property type="term" value="P:cell wall organization"/>
    <property type="evidence" value="ECO:0007669"/>
    <property type="project" value="UniProtKB-KW"/>
</dbReference>
<dbReference type="GO" id="GO:0000270">
    <property type="term" value="P:peptidoglycan metabolic process"/>
    <property type="evidence" value="ECO:0007669"/>
    <property type="project" value="InterPro"/>
</dbReference>
<dbReference type="CDD" id="cd16893">
    <property type="entry name" value="LT_MltC_MltE"/>
    <property type="match status" value="1"/>
</dbReference>
<dbReference type="FunFam" id="1.10.530.10:FF:000002">
    <property type="entry name" value="Membrane-bound lytic murein transglycosylase C"/>
    <property type="match status" value="1"/>
</dbReference>
<dbReference type="Gene3D" id="1.10.530.10">
    <property type="match status" value="1"/>
</dbReference>
<dbReference type="HAMAP" id="MF_01616">
    <property type="entry name" value="MltC"/>
    <property type="match status" value="1"/>
</dbReference>
<dbReference type="InterPro" id="IPR023346">
    <property type="entry name" value="Lysozyme-like_dom_sf"/>
</dbReference>
<dbReference type="InterPro" id="IPR023664">
    <property type="entry name" value="Murein_transglycosylaseC"/>
</dbReference>
<dbReference type="InterPro" id="IPR024570">
    <property type="entry name" value="Murein_transglycosylaseC_N"/>
</dbReference>
<dbReference type="InterPro" id="IPR000189">
    <property type="entry name" value="Transglyc_AS"/>
</dbReference>
<dbReference type="InterPro" id="IPR008258">
    <property type="entry name" value="Transglycosylase_SLT_dom_1"/>
</dbReference>
<dbReference type="NCBIfam" id="NF008670">
    <property type="entry name" value="PRK11671.1"/>
    <property type="match status" value="1"/>
</dbReference>
<dbReference type="PANTHER" id="PTHR37423:SF2">
    <property type="entry name" value="MEMBRANE-BOUND LYTIC MUREIN TRANSGLYCOSYLASE C"/>
    <property type="match status" value="1"/>
</dbReference>
<dbReference type="PANTHER" id="PTHR37423">
    <property type="entry name" value="SOLUBLE LYTIC MUREIN TRANSGLYCOSYLASE-RELATED"/>
    <property type="match status" value="1"/>
</dbReference>
<dbReference type="Pfam" id="PF11873">
    <property type="entry name" value="Mltc_N"/>
    <property type="match status" value="1"/>
</dbReference>
<dbReference type="Pfam" id="PF01464">
    <property type="entry name" value="SLT"/>
    <property type="match status" value="1"/>
</dbReference>
<dbReference type="SUPFAM" id="SSF53955">
    <property type="entry name" value="Lysozyme-like"/>
    <property type="match status" value="1"/>
</dbReference>
<dbReference type="PROSITE" id="PS51257">
    <property type="entry name" value="PROKAR_LIPOPROTEIN"/>
    <property type="match status" value="1"/>
</dbReference>
<dbReference type="PROSITE" id="PS00922">
    <property type="entry name" value="TRANSGLYCOSYLASE"/>
    <property type="match status" value="1"/>
</dbReference>
<reference key="1">
    <citation type="submission" date="2008-02" db="EMBL/GenBank/DDBJ databases">
        <title>Complete sequence of Escherichia coli C str. ATCC 8739.</title>
        <authorList>
            <person name="Copeland A."/>
            <person name="Lucas S."/>
            <person name="Lapidus A."/>
            <person name="Glavina del Rio T."/>
            <person name="Dalin E."/>
            <person name="Tice H."/>
            <person name="Bruce D."/>
            <person name="Goodwin L."/>
            <person name="Pitluck S."/>
            <person name="Kiss H."/>
            <person name="Brettin T."/>
            <person name="Detter J.C."/>
            <person name="Han C."/>
            <person name="Kuske C.R."/>
            <person name="Schmutz J."/>
            <person name="Larimer F."/>
            <person name="Land M."/>
            <person name="Hauser L."/>
            <person name="Kyrpides N."/>
            <person name="Mikhailova N."/>
            <person name="Ingram L."/>
            <person name="Richardson P."/>
        </authorList>
    </citation>
    <scope>NUCLEOTIDE SEQUENCE [LARGE SCALE GENOMIC DNA]</scope>
    <source>
        <strain>ATCC 8739 / DSM 1576 / NBRC 3972 / NCIMB 8545 / WDCM 00012 / Crooks</strain>
    </source>
</reference>
<proteinExistence type="inferred from homology"/>
<gene>
    <name evidence="1" type="primary">mltC</name>
    <name type="ordered locus">EcolC_0751</name>
</gene>
<name>MLTC_ECOLC</name>
<comment type="function">
    <text evidence="1">Murein-degrading enzyme. May play a role in recycling of muropeptides during cell elongation and/or cell division.</text>
</comment>
<comment type="catalytic activity">
    <reaction evidence="1">
        <text>Exolytic cleavage of the (1-&gt;4)-beta-glycosidic linkage between N-acetylmuramic acid (MurNAc) and N-acetylglucosamine (GlcNAc) residues in peptidoglycan, from either the reducing or the non-reducing ends of the peptidoglycan chains, with concomitant formation of a 1,6-anhydrobond in the MurNAc residue.</text>
        <dbReference type="EC" id="4.2.2.n1"/>
    </reaction>
</comment>
<comment type="subcellular location">
    <subcellularLocation>
        <location evidence="1">Cell outer membrane</location>
        <topology evidence="1">Lipid-anchor</topology>
    </subcellularLocation>
</comment>
<comment type="similarity">
    <text evidence="1">Belongs to the transglycosylase Slt family.</text>
</comment>
<comment type="sequence caution" evidence="2">
    <conflict type="erroneous initiation">
        <sequence resource="EMBL-CDS" id="ACA76423"/>
    </conflict>
</comment>
<sequence>MKKYLALALIAPLLISCSTTKKGDTYNEAWVKDTNGFDILMGQFAHNIENIWGFKEVVIAGPKDYVKYTDQYQTRSHINFDDGTITIETIAGTEPAAHLRRAIIKTLLMGDDPSSVDLYSDVDDITISKEPFLYGQVVDNTGQPIRWEGRASNFADYLLKNRLQSRSNGLRIIYSVTINMVPNHLDKRAHKYLGMVRQASRKYGVDESLILAIMQTESSFNPYAVSRSDALGLMQVVQHTAGKDVFRSQGKSGTPSRSFLFDPASNIDTGTAYLAMLNNVYLGGIDNPTSRRYAVITAYNGGAGSVLRVFSNDKIQAANIINTMTPGDVYQTLTTRHPSAESRRYLYKVNTAQKSYRRR</sequence>
<feature type="signal peptide" evidence="1">
    <location>
        <begin position="1"/>
        <end position="16"/>
    </location>
</feature>
<feature type="chain" id="PRO_0000335580" description="Membrane-bound lytic murein transglycosylase C">
    <location>
        <begin position="17"/>
        <end position="359"/>
    </location>
</feature>
<feature type="lipid moiety-binding region" description="N-palmitoyl cysteine" evidence="1">
    <location>
        <position position="17"/>
    </location>
</feature>
<feature type="lipid moiety-binding region" description="S-diacylglycerol cysteine" evidence="1">
    <location>
        <position position="17"/>
    </location>
</feature>